<dbReference type="PIR" id="A93164">
    <property type="entry name" value="SFRT"/>
</dbReference>
<dbReference type="InParanoid" id="P01159"/>
<dbReference type="Proteomes" id="UP000002494">
    <property type="component" value="Unplaced"/>
</dbReference>
<keyword id="KW-0027">Amidation</keyword>
<keyword id="KW-0903">Direct protein sequencing</keyword>
<keyword id="KW-1185">Reference proteome</keyword>
<evidence type="ECO:0000269" key="1">
    <source>
    </source>
</evidence>
<feature type="peptide" id="PRO_0000044218" description="Scotophobin">
    <location>
        <begin position="1"/>
        <end position="15"/>
    </location>
</feature>
<feature type="modified residue" description="Tyrosine amide" evidence="1">
    <location>
        <position position="15"/>
    </location>
</feature>
<protein>
    <recommendedName>
        <fullName>Scotophobin</fullName>
    </recommendedName>
</protein>
<organism>
    <name type="scientific">Rattus norvegicus</name>
    <name type="common">Rat</name>
    <dbReference type="NCBI Taxonomy" id="10116"/>
    <lineage>
        <taxon>Eukaryota</taxon>
        <taxon>Metazoa</taxon>
        <taxon>Chordata</taxon>
        <taxon>Craniata</taxon>
        <taxon>Vertebrata</taxon>
        <taxon>Euteleostomi</taxon>
        <taxon>Mammalia</taxon>
        <taxon>Eutheria</taxon>
        <taxon>Euarchontoglires</taxon>
        <taxon>Glires</taxon>
        <taxon>Rodentia</taxon>
        <taxon>Myomorpha</taxon>
        <taxon>Muroidea</taxon>
        <taxon>Muridae</taxon>
        <taxon>Murinae</taxon>
        <taxon>Rattus</taxon>
    </lineage>
</organism>
<comment type="tissue specificity">
    <text>Brain.</text>
</comment>
<sequence>SDNNQQGKSAQQGGY</sequence>
<name>SCOTP_RAT</name>
<accession>P01159</accession>
<reference key="1">
    <citation type="journal article" date="1972" name="Nature">
        <title>Isolation, identification and synthesis of a specific-behaviour-inducing brain peptide.</title>
        <authorList>
            <person name="Ungar G."/>
            <person name="Desiderio D.M."/>
            <person name="Parr W."/>
        </authorList>
    </citation>
    <scope>PROTEIN SEQUENCE</scope>
    <scope>AMIDATION AT TYR-15</scope>
    <scope>SYNTHESIS</scope>
</reference>
<reference key="2">
    <citation type="journal article" date="1971" name="J. Chem. Soc. Chem. Commun.">
        <authorList>
            <person name="Desiderio D.M."/>
            <person name="Ungar G."/>
            <person name="White P.A."/>
        </authorList>
    </citation>
    <scope>PROTEIN SEQUENCE</scope>
</reference>
<reference key="3">
    <citation type="journal article" date="1972" name="Nature">
        <title>Comments on the chemistry of scotophobin.</title>
        <authorList>
            <person name="Stewart W.W."/>
        </authorList>
    </citation>
    <scope>REFEREE'S COMMENTS ON PUBMED:4558348</scope>
</reference>
<reference key="4">
    <citation type="journal article" date="1972" name="Nature">
        <authorList>
            <person name="Ungar G."/>
            <person name="Desiderio D.M."/>
            <person name="Parr W."/>
        </authorList>
    </citation>
    <scope>REPLY TO REFEREE'S COMMENTS ON PUBMED:4558349</scope>
</reference>
<proteinExistence type="evidence at protein level"/>